<keyword id="KW-0025">Alternative splicing</keyword>
<keyword id="KW-0037">Angiogenesis</keyword>
<keyword id="KW-1003">Cell membrane</keyword>
<keyword id="KW-0966">Cell projection</keyword>
<keyword id="KW-0903">Direct protein sequencing</keyword>
<keyword id="KW-1015">Disulfide bond</keyword>
<keyword id="KW-0256">Endoplasmic reticulum</keyword>
<keyword id="KW-0325">Glycoprotein</keyword>
<keyword id="KW-0393">Immunoglobulin domain</keyword>
<keyword id="KW-0472">Membrane</keyword>
<keyword id="KW-0675">Receptor</keyword>
<keyword id="KW-1185">Reference proteome</keyword>
<keyword id="KW-0732">Signal</keyword>
<keyword id="KW-0812">Transmembrane</keyword>
<keyword id="KW-1133">Transmembrane helix</keyword>
<sequence length="388" mass="42414">MAAGADVPCAVLALLVLGSLAAGGDATAGFIKSPLSQRRLTQDSVELHCEAVGSPIPEIQWWFEGNEPNETSAQLWDGAWQDRVQINATYNLHSTSTIYIANLTSDDSGTYECRASNDPDRNHLSKSPKVKWIRSQANVLVIERPVITGQYSSSADKVVLSCNISAPPTLIKGHKWMLGDKVLKTDESDASSYISYTIEGKVEDHSGVYECIYNTNPVAKGNVSIEVEPQVVAYKKSEHGNEGDVGVLTCKSPSYPPVDHWAWYKSGQTVPLESSAGIYNISRTGNKTELRILKLNIEQDMGDYSCNGTNMKGSGSATVNLRVRSRLAALWPFLGIVAEVLVLVTIIFIYEKRRKPDEVLDDDDGGSAPLKSNATNHKDKNVRQRNAN</sequence>
<gene>
    <name type="primary">BSG</name>
</gene>
<organism>
    <name type="scientific">Gallus gallus</name>
    <name type="common">Chicken</name>
    <dbReference type="NCBI Taxonomy" id="9031"/>
    <lineage>
        <taxon>Eukaryota</taxon>
        <taxon>Metazoa</taxon>
        <taxon>Chordata</taxon>
        <taxon>Craniata</taxon>
        <taxon>Vertebrata</taxon>
        <taxon>Euteleostomi</taxon>
        <taxon>Archelosauria</taxon>
        <taxon>Archosauria</taxon>
        <taxon>Dinosauria</taxon>
        <taxon>Saurischia</taxon>
        <taxon>Theropoda</taxon>
        <taxon>Coelurosauria</taxon>
        <taxon>Aves</taxon>
        <taxon>Neognathae</taxon>
        <taxon>Galloanserae</taxon>
        <taxon>Galliformes</taxon>
        <taxon>Phasianidae</taxon>
        <taxon>Phasianinae</taxon>
        <taxon>Gallus</taxon>
    </lineage>
</organism>
<accession>P17790</accession>
<accession>Q6X975</accession>
<comment type="function">
    <molecule>Isoform 1</molecule>
    <text evidence="1 8">Essential for normal retinal maturation and development (By similarity). Acts as a retinal cell surface receptor for NXNL1 and plays an important role in NXNL1-mediated survival of retinal cone photoreceptors (PubMed:25957687). In association with glucose transporter SLC16A1/GLUT1 and NXNL1, promotes retinal cone survival by enhancing aerobic glycolysis and accelerating the entry of glucose into photoreceptors (PubMed:25957687).</text>
</comment>
<comment type="function">
    <molecule>Isoform 2</molecule>
    <text evidence="3">Signaling receptor for cyclophilins, essential for PPIA/CYPA and PPIB/CYPB-dependent signaling related to chemotaxis and adhesion of immune cells (By similarity). Plays an important role in targeting the monocarboxylate transporters SLC16A1/GLUT1, SLC16A3, SLC16A8, SLC16A11 and SLC16A12 to the plasma membrane (By similarity). Acts as a coreceptor for vascular endothelial growth factor receptor 2 (KDR/VEGFR2) in endothelial cells enhancing its VEGFA-mediated activation and downstream signaling (By similarity). Promotes angiogenesis through EPAS1/HIF2A-mediated up-regulation of VEGFA and KDR/VEGFR2 in endothelial cells (By similarity).</text>
</comment>
<comment type="subunit">
    <molecule>Isoform 1</molecule>
    <text evidence="8">Interacts with NXNL1, SLC2A1 and SLC16A1.</text>
</comment>
<comment type="subcellular location">
    <molecule>Isoform 1</molecule>
    <subcellularLocation>
        <location evidence="8">Cell membrane</location>
        <topology evidence="2">Single-pass type I membrane protein</topology>
    </subcellularLocation>
    <subcellularLocation>
        <location evidence="1">Photoreceptor inner segment</location>
    </subcellularLocation>
    <subcellularLocation>
        <location evidence="1">Cell projection</location>
        <location evidence="1">Cilium</location>
        <location evidence="1">Photoreceptor outer segment</location>
    </subcellularLocation>
</comment>
<comment type="subcellular location">
    <molecule>Isoform 2</molecule>
    <subcellularLocation>
        <location evidence="7">Cell membrane</location>
        <topology evidence="2">Single-pass type I membrane protein</topology>
    </subcellularLocation>
    <subcellularLocation>
        <location evidence="3">Endoplasmic reticulum membrane</location>
        <topology evidence="2">Single-pass type I membrane protein</topology>
    </subcellularLocation>
    <subcellularLocation>
        <location evidence="3">Basolateral cell membrane</location>
        <topology evidence="2">Single-pass type I membrane protein</topology>
    </subcellularLocation>
</comment>
<comment type="alternative products">
    <event type="alternative splicing"/>
    <isoform>
        <id>P17790-1</id>
        <name>1</name>
        <name>Long</name>
        <name evidence="9">Basigin-1</name>
        <sequence type="displayed"/>
    </isoform>
    <isoform>
        <id>P17790-2</id>
        <name>2</name>
        <name>Short</name>
        <name evidence="9">Basigin-2</name>
        <sequence type="described" ref="VSP_011504"/>
    </isoform>
</comment>
<comment type="tissue specificity">
    <molecule>Isoform 1</molecule>
    <text evidence="8">Retinal cone photoreceptors (at protein level).</text>
</comment>
<comment type="tissue specificity">
    <molecule>Isoform 2</molecule>
    <text evidence="7">Brain endothelial cells, kidney epithelial cells and erythroblasts (at protein level).</text>
</comment>
<comment type="PTM">
    <molecule>Isoform 2</molecule>
    <text evidence="7">N-glycosylated.</text>
</comment>
<reference key="1">
    <citation type="journal article" date="1990" name="EMBO J.">
        <title>The inducible blood-brain barrier specific molecule HT7 is a novel immunoglobulin-like cell surface glycoprotein.</title>
        <authorList>
            <person name="Seulberger H."/>
            <person name="Lottspeich F."/>
            <person name="Risau W."/>
        </authorList>
    </citation>
    <scope>NUCLEOTIDE SEQUENCE [MRNA] (ISOFORM 2)</scope>
    <scope>PARTIAL PROTEIN SEQUENCE</scope>
    <scope>SUBCELLULAR LOCATION (ISOFORM 2)</scope>
    <scope>TISSUE SPECIFICITY (ISOFORM 2)</scope>
    <scope>GLYCOSYLATION (ISOFORM 2)</scope>
</reference>
<reference key="2">
    <citation type="journal article" date="2003" name="Invest. Ophthalmol. Vis. Sci.">
        <title>Retina-specific expression of 5A11/Basigin-2, a member of the immunoglobulin gene superfamily.</title>
        <authorList>
            <person name="Ochrietor J.D."/>
            <person name="Moroz T.P."/>
            <person name="van Ekeris L."/>
            <person name="Clamp M.F."/>
            <person name="Jefferson S.C."/>
            <person name="deCarvalho A.C."/>
            <person name="Fadool J.M."/>
            <person name="Wistow G."/>
            <person name="Muramatsu T."/>
            <person name="Linser P.J."/>
        </authorList>
    </citation>
    <scope>NUCLEOTIDE SEQUENCE [MRNA] (ISOFORM 1)</scope>
    <source>
        <tissue>Retina</tissue>
    </source>
</reference>
<reference key="3">
    <citation type="journal article" date="1995" name="Eur. J. Cell Biol.">
        <title>Neurothelin: amino acid sequence, cell surface dynamics and actin colocalization.</title>
        <authorList>
            <person name="Schlosshauer B."/>
            <person name="Bauch H."/>
            <person name="Frank R."/>
        </authorList>
    </citation>
    <scope>PARTIAL PROTEIN SEQUENCE</scope>
    <source>
        <strain>White leghorn</strain>
        <tissue>Retina</tissue>
    </source>
</reference>
<reference key="4">
    <citation type="journal article" date="2015" name="Cell">
        <title>Rod-derived cone viability factor promotes cone survival by stimulating aerobic glycolysis.</title>
        <authorList>
            <person name="Ait-Ali N."/>
            <person name="Fridlich R."/>
            <person name="Millet-Puel G."/>
            <person name="Clerin E."/>
            <person name="Delalande F."/>
            <person name="Jaillard C."/>
            <person name="Blond F."/>
            <person name="Perrocheau L."/>
            <person name="Reichman S."/>
            <person name="Byrne L.C."/>
            <person name="Olivier-Bandini A."/>
            <person name="Bellalou J."/>
            <person name="Moyse E."/>
            <person name="Bouillaud F."/>
            <person name="Nicol X."/>
            <person name="Dalkara D."/>
            <person name="van Dorsselaer A."/>
            <person name="Sahel J.A."/>
            <person name="Leveillard T."/>
        </authorList>
    </citation>
    <scope>FUNCTION (ISOFORM 1)</scope>
    <scope>INTERACTION WITH NXNL1; SLC2A1 AND SLC16A1 (ISOFORM 1)</scope>
    <scope>SUBCELLULAR LOCATION (ISOFORM 1)</scope>
    <scope>TISSUE SPECIFICITY (ISOFORM 1)</scope>
</reference>
<dbReference type="EMBL" id="X52751">
    <property type="protein sequence ID" value="CAA36962.1"/>
    <property type="molecule type" value="mRNA"/>
</dbReference>
<dbReference type="EMBL" id="AY248696">
    <property type="protein sequence ID" value="AAP80139.1"/>
    <property type="molecule type" value="mRNA"/>
</dbReference>
<dbReference type="RefSeq" id="NP_001185919.1">
    <molecule id="P17790-1"/>
    <property type="nucleotide sequence ID" value="NM_001198990.3"/>
</dbReference>
<dbReference type="RefSeq" id="NP_001185921.1">
    <molecule id="P17790-2"/>
    <property type="nucleotide sequence ID" value="NM_001198992.2"/>
</dbReference>
<dbReference type="SMR" id="P17790"/>
<dbReference type="BioGRID" id="691081">
    <property type="interactions" value="1"/>
</dbReference>
<dbReference type="FunCoup" id="P17790">
    <property type="interactions" value="1595"/>
</dbReference>
<dbReference type="STRING" id="9031.ENSGALP00000002020"/>
<dbReference type="MEROPS" id="I43.951"/>
<dbReference type="GlyCosmos" id="P17790">
    <property type="glycosylation" value="5 sites, No reported glycans"/>
</dbReference>
<dbReference type="GlyGen" id="P17790">
    <property type="glycosylation" value="5 sites"/>
</dbReference>
<dbReference type="PaxDb" id="9031-ENSGALP00000002020"/>
<dbReference type="Ensembl" id="ENSGALT00010066568.1">
    <molecule id="P17790-1"/>
    <property type="protein sequence ID" value="ENSGALP00010040770.1"/>
    <property type="gene ID" value="ENSGALG00010027468.1"/>
</dbReference>
<dbReference type="GeneID" id="770363"/>
<dbReference type="KEGG" id="gga:770363"/>
<dbReference type="CTD" id="682"/>
<dbReference type="VEuPathDB" id="HostDB:geneid_770363"/>
<dbReference type="eggNOG" id="ENOG502QPKN">
    <property type="taxonomic scope" value="Eukaryota"/>
</dbReference>
<dbReference type="GeneTree" id="ENSGT00940000159142"/>
<dbReference type="HOGENOM" id="CLU_058449_0_0_1"/>
<dbReference type="InParanoid" id="P17790"/>
<dbReference type="OMA" id="TITGHKW"/>
<dbReference type="OrthoDB" id="5970915at2759"/>
<dbReference type="PhylomeDB" id="P17790"/>
<dbReference type="Reactome" id="R-GGA-1474228">
    <molecule id="P17790-2"/>
    <property type="pathway name" value="Degradation of the extracellular matrix"/>
</dbReference>
<dbReference type="Reactome" id="R-GGA-210991">
    <molecule id="P17790-2"/>
    <property type="pathway name" value="Basigin interactions"/>
</dbReference>
<dbReference type="Reactome" id="R-GGA-216083">
    <molecule id="P17790-2"/>
    <property type="pathway name" value="Integrin cell surface interactions"/>
</dbReference>
<dbReference type="Reactome" id="R-GGA-373920">
    <property type="pathway name" value="Pyruvate metabolism"/>
</dbReference>
<dbReference type="Reactome" id="R-GGA-433692">
    <molecule id="P17790-2"/>
    <property type="pathway name" value="Proton-coupled monocarboxylate transport"/>
</dbReference>
<dbReference type="Reactome" id="R-GGA-9749641">
    <molecule id="P17790-2"/>
    <property type="pathway name" value="Aspirin ADME"/>
</dbReference>
<dbReference type="PRO" id="PR:P17790"/>
<dbReference type="Proteomes" id="UP000000539">
    <property type="component" value="Chromosome 28"/>
</dbReference>
<dbReference type="Bgee" id="ENSGALG00000001328">
    <property type="expression patterns" value="Expressed in heart and 14 other cell types or tissues"/>
</dbReference>
<dbReference type="GO" id="GO:0002080">
    <property type="term" value="C:acrosomal membrane"/>
    <property type="evidence" value="ECO:0007669"/>
    <property type="project" value="Ensembl"/>
</dbReference>
<dbReference type="GO" id="GO:0030424">
    <property type="term" value="C:axon"/>
    <property type="evidence" value="ECO:0000318"/>
    <property type="project" value="GO_Central"/>
</dbReference>
<dbReference type="GO" id="GO:0016323">
    <property type="term" value="C:basolateral plasma membrane"/>
    <property type="evidence" value="ECO:0007669"/>
    <property type="project" value="UniProtKB-SubCell"/>
</dbReference>
<dbReference type="GO" id="GO:0005789">
    <property type="term" value="C:endoplasmic reticulum membrane"/>
    <property type="evidence" value="ECO:0007669"/>
    <property type="project" value="UniProtKB-SubCell"/>
</dbReference>
<dbReference type="GO" id="GO:0001917">
    <property type="term" value="C:photoreceptor inner segment"/>
    <property type="evidence" value="ECO:0000250"/>
    <property type="project" value="UniProtKB"/>
</dbReference>
<dbReference type="GO" id="GO:0001750">
    <property type="term" value="C:photoreceptor outer segment"/>
    <property type="evidence" value="ECO:0000250"/>
    <property type="project" value="UniProtKB"/>
</dbReference>
<dbReference type="GO" id="GO:0005886">
    <property type="term" value="C:plasma membrane"/>
    <property type="evidence" value="ECO:0000314"/>
    <property type="project" value="UniProtKB"/>
</dbReference>
<dbReference type="GO" id="GO:0098632">
    <property type="term" value="F:cell-cell adhesion mediator activity"/>
    <property type="evidence" value="ECO:0000318"/>
    <property type="project" value="GO_Central"/>
</dbReference>
<dbReference type="GO" id="GO:0038023">
    <property type="term" value="F:signaling receptor activity"/>
    <property type="evidence" value="ECO:0000250"/>
    <property type="project" value="UniProtKB"/>
</dbReference>
<dbReference type="GO" id="GO:0001525">
    <property type="term" value="P:angiogenesis"/>
    <property type="evidence" value="ECO:0007669"/>
    <property type="project" value="UniProtKB-KW"/>
</dbReference>
<dbReference type="GO" id="GO:0007411">
    <property type="term" value="P:axon guidance"/>
    <property type="evidence" value="ECO:0000318"/>
    <property type="project" value="GO_Central"/>
</dbReference>
<dbReference type="GO" id="GO:0070593">
    <property type="term" value="P:dendrite self-avoidance"/>
    <property type="evidence" value="ECO:0000318"/>
    <property type="project" value="GO_Central"/>
</dbReference>
<dbReference type="GO" id="GO:0061154">
    <property type="term" value="P:endothelial tube morphogenesis"/>
    <property type="evidence" value="ECO:0000250"/>
    <property type="project" value="UniProtKB"/>
</dbReference>
<dbReference type="GO" id="GO:0007156">
    <property type="term" value="P:homophilic cell adhesion via plasma membrane adhesion molecules"/>
    <property type="evidence" value="ECO:0000318"/>
    <property type="project" value="GO_Central"/>
</dbReference>
<dbReference type="GO" id="GO:0003407">
    <property type="term" value="P:neural retina development"/>
    <property type="evidence" value="ECO:0000250"/>
    <property type="project" value="UniProtKB"/>
</dbReference>
<dbReference type="GO" id="GO:0030593">
    <property type="term" value="P:neutrophil chemotaxis"/>
    <property type="evidence" value="ECO:0007669"/>
    <property type="project" value="Ensembl"/>
</dbReference>
<dbReference type="GO" id="GO:0045494">
    <property type="term" value="P:photoreceptor cell maintenance"/>
    <property type="evidence" value="ECO:0000315"/>
    <property type="project" value="UniProtKB"/>
</dbReference>
<dbReference type="GO" id="GO:0010595">
    <property type="term" value="P:positive regulation of endothelial cell migration"/>
    <property type="evidence" value="ECO:0000250"/>
    <property type="project" value="UniProtKB"/>
</dbReference>
<dbReference type="GO" id="GO:0010575">
    <property type="term" value="P:positive regulation of vascular endothelial growth factor production"/>
    <property type="evidence" value="ECO:0000250"/>
    <property type="project" value="UniProtKB"/>
</dbReference>
<dbReference type="GO" id="GO:0072659">
    <property type="term" value="P:protein localization to plasma membrane"/>
    <property type="evidence" value="ECO:0007669"/>
    <property type="project" value="Ensembl"/>
</dbReference>
<dbReference type="CDD" id="cd20940">
    <property type="entry name" value="Ig0_BSG1"/>
    <property type="match status" value="1"/>
</dbReference>
<dbReference type="FunFam" id="2.60.40.10:FF:000291">
    <property type="entry name" value="Neuroplastin b"/>
    <property type="match status" value="1"/>
</dbReference>
<dbReference type="FunFam" id="2.60.40.10:FF:000387">
    <property type="entry name" value="Neuroplastin b"/>
    <property type="match status" value="1"/>
</dbReference>
<dbReference type="Gene3D" id="2.60.40.10">
    <property type="entry name" value="Immunoglobulins"/>
    <property type="match status" value="3"/>
</dbReference>
<dbReference type="InterPro" id="IPR007110">
    <property type="entry name" value="Ig-like_dom"/>
</dbReference>
<dbReference type="InterPro" id="IPR036179">
    <property type="entry name" value="Ig-like_dom_sf"/>
</dbReference>
<dbReference type="InterPro" id="IPR013783">
    <property type="entry name" value="Ig-like_fold"/>
</dbReference>
<dbReference type="InterPro" id="IPR003599">
    <property type="entry name" value="Ig_sub"/>
</dbReference>
<dbReference type="InterPro" id="IPR003598">
    <property type="entry name" value="Ig_sub2"/>
</dbReference>
<dbReference type="PANTHER" id="PTHR10075:SF107">
    <property type="entry name" value="BASIGIN"/>
    <property type="match status" value="1"/>
</dbReference>
<dbReference type="PANTHER" id="PTHR10075">
    <property type="entry name" value="BASIGIN RELATED"/>
    <property type="match status" value="1"/>
</dbReference>
<dbReference type="Pfam" id="PF13927">
    <property type="entry name" value="Ig_3"/>
    <property type="match status" value="2"/>
</dbReference>
<dbReference type="SMART" id="SM00409">
    <property type="entry name" value="IG"/>
    <property type="match status" value="3"/>
</dbReference>
<dbReference type="SMART" id="SM00408">
    <property type="entry name" value="IGc2"/>
    <property type="match status" value="2"/>
</dbReference>
<dbReference type="SUPFAM" id="SSF48726">
    <property type="entry name" value="Immunoglobulin"/>
    <property type="match status" value="2"/>
</dbReference>
<dbReference type="PROSITE" id="PS50835">
    <property type="entry name" value="IG_LIKE"/>
    <property type="match status" value="2"/>
</dbReference>
<name>BASI_CHICK</name>
<evidence type="ECO:0000250" key="1">
    <source>
        <dbReference type="UniProtKB" id="P18572"/>
    </source>
</evidence>
<evidence type="ECO:0000250" key="2">
    <source>
        <dbReference type="UniProtKB" id="P26453"/>
    </source>
</evidence>
<evidence type="ECO:0000250" key="3">
    <source>
        <dbReference type="UniProtKB" id="P35613"/>
    </source>
</evidence>
<evidence type="ECO:0000255" key="4"/>
<evidence type="ECO:0000255" key="5">
    <source>
        <dbReference type="PROSITE-ProRule" id="PRU00114"/>
    </source>
</evidence>
<evidence type="ECO:0000256" key="6">
    <source>
        <dbReference type="SAM" id="MobiDB-lite"/>
    </source>
</evidence>
<evidence type="ECO:0000269" key="7">
    <source>
    </source>
</evidence>
<evidence type="ECO:0000269" key="8">
    <source>
    </source>
</evidence>
<evidence type="ECO:0000303" key="9">
    <source>
    </source>
</evidence>
<evidence type="ECO:0000305" key="10"/>
<protein>
    <recommendedName>
        <fullName>Basigin</fullName>
    </recommendedName>
    <alternativeName>
        <fullName>5A11 antigen</fullName>
    </alternativeName>
    <alternativeName>
        <fullName>Blood-brain barrier HT7 antigen</fullName>
    </alternativeName>
    <alternativeName>
        <fullName>Neurothelin</fullName>
    </alternativeName>
</protein>
<feature type="signal peptide" evidence="4">
    <location>
        <begin position="1"/>
        <end position="21"/>
    </location>
</feature>
<feature type="chain" id="PRO_0000014522" description="Basigin">
    <location>
        <begin position="22"/>
        <end position="388"/>
    </location>
</feature>
<feature type="topological domain" description="Extracellular" evidence="2">
    <location>
        <begin position="27"/>
        <end position="323"/>
    </location>
</feature>
<feature type="transmembrane region" description="Helical" evidence="4">
    <location>
        <begin position="324"/>
        <end position="344"/>
    </location>
</feature>
<feature type="topological domain" description="Cytoplasmic" evidence="2">
    <location>
        <begin position="345"/>
        <end position="388"/>
    </location>
</feature>
<feature type="domain" description="Ig-like" evidence="5">
    <location>
        <begin position="43"/>
        <end position="131"/>
    </location>
</feature>
<feature type="domain" description="Ig-like C2-type" evidence="5">
    <location>
        <begin position="143"/>
        <end position="218"/>
    </location>
</feature>
<feature type="domain" description="Ig-like V-type" evidence="5">
    <location>
        <begin position="229"/>
        <end position="323"/>
    </location>
</feature>
<feature type="region of interest" description="Disordered" evidence="6">
    <location>
        <begin position="358"/>
        <end position="388"/>
    </location>
</feature>
<feature type="glycosylation site" description="N-linked (GlcNAc...) asparagine" evidence="4">
    <location>
        <position position="163"/>
    </location>
</feature>
<feature type="glycosylation site" description="N-linked (GlcNAc...) asparagine" evidence="4">
    <location>
        <position position="222"/>
    </location>
</feature>
<feature type="glycosylation site" description="N-linked (GlcNAc...) asparagine" evidence="4">
    <location>
        <position position="280"/>
    </location>
</feature>
<feature type="glycosylation site" description="N-linked (GlcNAc...) asparagine" evidence="4">
    <location>
        <position position="286"/>
    </location>
</feature>
<feature type="glycosylation site" description="N-linked (GlcNAc...) asparagine" evidence="4">
    <location>
        <position position="307"/>
    </location>
</feature>
<feature type="disulfide bond" evidence="5">
    <location>
        <begin position="49"/>
        <end position="113"/>
    </location>
</feature>
<feature type="disulfide bond" evidence="5">
    <location>
        <begin position="162"/>
        <end position="211"/>
    </location>
</feature>
<feature type="disulfide bond" evidence="5">
    <location>
        <begin position="250"/>
        <end position="306"/>
    </location>
</feature>
<feature type="splice variant" id="VSP_011504" description="In isoform 2." evidence="10">
    <original>AGFIKSPLSQRRLTQDSVELHCEAVGSPIPEIQWWFEGNEPNETSAQLWDGAWQDRVQINATYNLHSTSTIYIANLTSDDSGTYECRASNDPDRNHLSKSPKVKWIRSQANVLVIER</original>
    <variation>G</variation>
    <location>
        <begin position="28"/>
        <end position="144"/>
    </location>
</feature>
<proteinExistence type="evidence at protein level"/>